<dbReference type="EMBL" id="AC007454">
    <property type="protein sequence ID" value="AAD39612.1"/>
    <property type="molecule type" value="Genomic_DNA"/>
</dbReference>
<dbReference type="EMBL" id="CP002684">
    <property type="protein sequence ID" value="AEE31684.1"/>
    <property type="molecule type" value="Genomic_DNA"/>
</dbReference>
<dbReference type="EMBL" id="AF361813">
    <property type="protein sequence ID" value="AAK32826.1"/>
    <property type="molecule type" value="mRNA"/>
</dbReference>
<dbReference type="EMBL" id="AY133552">
    <property type="protein sequence ID" value="AAM91382.1"/>
    <property type="molecule type" value="mRNA"/>
</dbReference>
<dbReference type="EMBL" id="BT000730">
    <property type="protein sequence ID" value="AAN31872.1"/>
    <property type="molecule type" value="mRNA"/>
</dbReference>
<dbReference type="PIR" id="B86466">
    <property type="entry name" value="B86466"/>
</dbReference>
<dbReference type="RefSeq" id="NP_564440.1">
    <property type="nucleotide sequence ID" value="NM_103142.4"/>
</dbReference>
<dbReference type="SMR" id="Q9XIC5"/>
<dbReference type="FunCoup" id="Q9XIC5">
    <property type="interactions" value="2535"/>
</dbReference>
<dbReference type="STRING" id="3702.Q9XIC5"/>
<dbReference type="GlyGen" id="Q9XIC5">
    <property type="glycosylation" value="1 site"/>
</dbReference>
<dbReference type="iPTMnet" id="Q9XIC5"/>
<dbReference type="PaxDb" id="3702-AT1G34190.1"/>
<dbReference type="ProteomicsDB" id="251266"/>
<dbReference type="EnsemblPlants" id="AT1G34190.1">
    <property type="protein sequence ID" value="AT1G34190.1"/>
    <property type="gene ID" value="AT1G34190"/>
</dbReference>
<dbReference type="GeneID" id="840318"/>
<dbReference type="Gramene" id="AT1G34190.1">
    <property type="protein sequence ID" value="AT1G34190.1"/>
    <property type="gene ID" value="AT1G34190"/>
</dbReference>
<dbReference type="KEGG" id="ath:AT1G34190"/>
<dbReference type="Araport" id="AT1G34190"/>
<dbReference type="TAIR" id="AT1G34190">
    <property type="gene designation" value="NAC017"/>
</dbReference>
<dbReference type="eggNOG" id="ENOG502QT9T">
    <property type="taxonomic scope" value="Eukaryota"/>
</dbReference>
<dbReference type="HOGENOM" id="CLU_030918_1_0_1"/>
<dbReference type="InParanoid" id="Q9XIC5"/>
<dbReference type="OMA" id="CHVVEED"/>
<dbReference type="PhylomeDB" id="Q9XIC5"/>
<dbReference type="PRO" id="PR:Q9XIC5"/>
<dbReference type="Proteomes" id="UP000006548">
    <property type="component" value="Chromosome 1"/>
</dbReference>
<dbReference type="ExpressionAtlas" id="Q9XIC5">
    <property type="expression patterns" value="baseline and differential"/>
</dbReference>
<dbReference type="GO" id="GO:0005789">
    <property type="term" value="C:endoplasmic reticulum membrane"/>
    <property type="evidence" value="ECO:0000314"/>
    <property type="project" value="UniProtKB"/>
</dbReference>
<dbReference type="GO" id="GO:0005634">
    <property type="term" value="C:nucleus"/>
    <property type="evidence" value="ECO:0000314"/>
    <property type="project" value="UniProtKB"/>
</dbReference>
<dbReference type="GO" id="GO:0003700">
    <property type="term" value="F:DNA-binding transcription factor activity"/>
    <property type="evidence" value="ECO:0000250"/>
    <property type="project" value="TAIR"/>
</dbReference>
<dbReference type="GO" id="GO:0000976">
    <property type="term" value="F:transcription cis-regulatory region binding"/>
    <property type="evidence" value="ECO:0000353"/>
    <property type="project" value="TAIR"/>
</dbReference>
<dbReference type="GO" id="GO:0070301">
    <property type="term" value="P:cellular response to hydrogen peroxide"/>
    <property type="evidence" value="ECO:0000315"/>
    <property type="project" value="UniProtKB"/>
</dbReference>
<dbReference type="GO" id="GO:0010150">
    <property type="term" value="P:leaf senescence"/>
    <property type="evidence" value="ECO:0000315"/>
    <property type="project" value="TAIR"/>
</dbReference>
<dbReference type="GO" id="GO:0031930">
    <property type="term" value="P:mitochondria-nucleus signaling pathway"/>
    <property type="evidence" value="ECO:0000315"/>
    <property type="project" value="TAIR"/>
</dbReference>
<dbReference type="GO" id="GO:0045893">
    <property type="term" value="P:positive regulation of DNA-templated transcription"/>
    <property type="evidence" value="ECO:0000315"/>
    <property type="project" value="TAIR"/>
</dbReference>
<dbReference type="FunFam" id="2.170.150.80:FF:000006">
    <property type="entry name" value="NAC domain-containing protein 100-like"/>
    <property type="match status" value="1"/>
</dbReference>
<dbReference type="Gene3D" id="2.170.150.80">
    <property type="entry name" value="NAC domain"/>
    <property type="match status" value="1"/>
</dbReference>
<dbReference type="InterPro" id="IPR003441">
    <property type="entry name" value="NAC-dom"/>
</dbReference>
<dbReference type="InterPro" id="IPR036093">
    <property type="entry name" value="NAC_dom_sf"/>
</dbReference>
<dbReference type="PANTHER" id="PTHR31744:SF216">
    <property type="entry name" value="NAC TRANSCRIPTION FACTOR"/>
    <property type="match status" value="1"/>
</dbReference>
<dbReference type="PANTHER" id="PTHR31744">
    <property type="entry name" value="PROTEIN CUP-SHAPED COTYLEDON 2-RELATED"/>
    <property type="match status" value="1"/>
</dbReference>
<dbReference type="Pfam" id="PF02365">
    <property type="entry name" value="NAM"/>
    <property type="match status" value="1"/>
</dbReference>
<dbReference type="SUPFAM" id="SSF101941">
    <property type="entry name" value="NAC domain"/>
    <property type="match status" value="1"/>
</dbReference>
<dbReference type="PROSITE" id="PS51005">
    <property type="entry name" value="NAC"/>
    <property type="match status" value="1"/>
</dbReference>
<name>NAC17_ARATH</name>
<sequence>MADSSPDSCFKGGKFSAPGFRFHPTDEELVMYYLKRKICRKRLRVNVIGVVDVYKMDPEELPGQSMLKTGDRQWFYFTPRSRKYPNAARSNRGTENGYWKATGKDRVIEYNSRSVGLKKTLVFYRGRAPSGERTDWVMHEYTMDEDELGRCKNPQEYYALYKLFKKSGAGPKNGEQYGAPFQEEEWVDDDNEDVNAIAVAVPEQPVVRYEDARRVDERRLFNPVILQLEDIDELLNGIPNAPGVPQRCIPQVNSEEELQSTLVNNSAREFLPNGQQYNRPSSFDSLETAEVTSAPLVFEKEDFIEMDDLLLIPEFGASSTEKAAQFSNHGEFDDFNEFDQLFHDVSMSLDMEPIDQGTSANLSSLSDSANYTSDQKQQLLYQQFQDQTPENQLNNIMDPSTTLNQITSDIWFEDDQAILFDQQQSFSGAFASPSSGVMPDSTNPTMSVNAQGHEIQNGGGTTSQFSSALWALMDSIPSTPASACEGPLNRTFVRMSSFSRMRFNGKANGTPVSTTIAKKGIRNRGFLLLSIVGALCAIFWVLVATVRVSGRSLLLKD</sequence>
<protein>
    <recommendedName>
        <fullName evidence="5">NAC domain-containing protein 17</fullName>
        <shortName evidence="5">ANAC017</shortName>
    </recommendedName>
    <alternativeName>
        <fullName evidence="6">Protein NTM1-like 7</fullName>
    </alternativeName>
    <alternativeName>
        <fullName evidence="7">Protein REGULATORS OF AOX1A 2</fullName>
    </alternativeName>
</protein>
<feature type="chain" id="PRO_0000432443" description="NAC domain-containing protein 17">
    <location>
        <begin position="1"/>
        <end position="557"/>
    </location>
</feature>
<feature type="transmembrane region" description="Helical" evidence="1">
    <location>
        <begin position="526"/>
        <end position="546"/>
    </location>
</feature>
<feature type="domain" description="NAC" evidence="2">
    <location>
        <begin position="16"/>
        <end position="166"/>
    </location>
</feature>
<feature type="DNA-binding region" evidence="2">
    <location>
        <begin position="115"/>
        <end position="172"/>
    </location>
</feature>
<gene>
    <name evidence="10" type="primary">NAC017</name>
    <name evidence="6" type="synonym">NTL7</name>
    <name evidence="7" type="synonym">RAO2</name>
    <name evidence="8" type="ordered locus">At1g34190</name>
    <name evidence="9" type="ORF">F23M19.13</name>
</gene>
<reference key="1">
    <citation type="journal article" date="2000" name="Nature">
        <title>Sequence and analysis of chromosome 1 of the plant Arabidopsis thaliana.</title>
        <authorList>
            <person name="Theologis A."/>
            <person name="Ecker J.R."/>
            <person name="Palm C.J."/>
            <person name="Federspiel N.A."/>
            <person name="Kaul S."/>
            <person name="White O."/>
            <person name="Alonso J."/>
            <person name="Altafi H."/>
            <person name="Araujo R."/>
            <person name="Bowman C.L."/>
            <person name="Brooks S.Y."/>
            <person name="Buehler E."/>
            <person name="Chan A."/>
            <person name="Chao Q."/>
            <person name="Chen H."/>
            <person name="Cheuk R.F."/>
            <person name="Chin C.W."/>
            <person name="Chung M.K."/>
            <person name="Conn L."/>
            <person name="Conway A.B."/>
            <person name="Conway A.R."/>
            <person name="Creasy T.H."/>
            <person name="Dewar K."/>
            <person name="Dunn P."/>
            <person name="Etgu P."/>
            <person name="Feldblyum T.V."/>
            <person name="Feng J.-D."/>
            <person name="Fong B."/>
            <person name="Fujii C.Y."/>
            <person name="Gill J.E."/>
            <person name="Goldsmith A.D."/>
            <person name="Haas B."/>
            <person name="Hansen N.F."/>
            <person name="Hughes B."/>
            <person name="Huizar L."/>
            <person name="Hunter J.L."/>
            <person name="Jenkins J."/>
            <person name="Johnson-Hopson C."/>
            <person name="Khan S."/>
            <person name="Khaykin E."/>
            <person name="Kim C.J."/>
            <person name="Koo H.L."/>
            <person name="Kremenetskaia I."/>
            <person name="Kurtz D.B."/>
            <person name="Kwan A."/>
            <person name="Lam B."/>
            <person name="Langin-Hooper S."/>
            <person name="Lee A."/>
            <person name="Lee J.M."/>
            <person name="Lenz C.A."/>
            <person name="Li J.H."/>
            <person name="Li Y.-P."/>
            <person name="Lin X."/>
            <person name="Liu S.X."/>
            <person name="Liu Z.A."/>
            <person name="Luros J.S."/>
            <person name="Maiti R."/>
            <person name="Marziali A."/>
            <person name="Militscher J."/>
            <person name="Miranda M."/>
            <person name="Nguyen M."/>
            <person name="Nierman W.C."/>
            <person name="Osborne B.I."/>
            <person name="Pai G."/>
            <person name="Peterson J."/>
            <person name="Pham P.K."/>
            <person name="Rizzo M."/>
            <person name="Rooney T."/>
            <person name="Rowley D."/>
            <person name="Sakano H."/>
            <person name="Salzberg S.L."/>
            <person name="Schwartz J.R."/>
            <person name="Shinn P."/>
            <person name="Southwick A.M."/>
            <person name="Sun H."/>
            <person name="Tallon L.J."/>
            <person name="Tambunga G."/>
            <person name="Toriumi M.J."/>
            <person name="Town C.D."/>
            <person name="Utterback T."/>
            <person name="Van Aken S."/>
            <person name="Vaysberg M."/>
            <person name="Vysotskaia V.S."/>
            <person name="Walker M."/>
            <person name="Wu D."/>
            <person name="Yu G."/>
            <person name="Fraser C.M."/>
            <person name="Venter J.C."/>
            <person name="Davis R.W."/>
        </authorList>
    </citation>
    <scope>NUCLEOTIDE SEQUENCE [LARGE SCALE GENOMIC DNA]</scope>
    <source>
        <strain>cv. Columbia</strain>
    </source>
</reference>
<reference key="2">
    <citation type="journal article" date="2017" name="Plant J.">
        <title>Araport11: a complete reannotation of the Arabidopsis thaliana reference genome.</title>
        <authorList>
            <person name="Cheng C.Y."/>
            <person name="Krishnakumar V."/>
            <person name="Chan A.P."/>
            <person name="Thibaud-Nissen F."/>
            <person name="Schobel S."/>
            <person name="Town C.D."/>
        </authorList>
    </citation>
    <scope>GENOME REANNOTATION</scope>
    <source>
        <strain>cv. Columbia</strain>
    </source>
</reference>
<reference key="3">
    <citation type="journal article" date="2003" name="Science">
        <title>Empirical analysis of transcriptional activity in the Arabidopsis genome.</title>
        <authorList>
            <person name="Yamada K."/>
            <person name="Lim J."/>
            <person name="Dale J.M."/>
            <person name="Chen H."/>
            <person name="Shinn P."/>
            <person name="Palm C.J."/>
            <person name="Southwick A.M."/>
            <person name="Wu H.C."/>
            <person name="Kim C.J."/>
            <person name="Nguyen M."/>
            <person name="Pham P.K."/>
            <person name="Cheuk R.F."/>
            <person name="Karlin-Newmann G."/>
            <person name="Liu S.X."/>
            <person name="Lam B."/>
            <person name="Sakano H."/>
            <person name="Wu T."/>
            <person name="Yu G."/>
            <person name="Miranda M."/>
            <person name="Quach H.L."/>
            <person name="Tripp M."/>
            <person name="Chang C.H."/>
            <person name="Lee J.M."/>
            <person name="Toriumi M.J."/>
            <person name="Chan M.M."/>
            <person name="Tang C.C."/>
            <person name="Onodera C.S."/>
            <person name="Deng J.M."/>
            <person name="Akiyama K."/>
            <person name="Ansari Y."/>
            <person name="Arakawa T."/>
            <person name="Banh J."/>
            <person name="Banno F."/>
            <person name="Bowser L."/>
            <person name="Brooks S.Y."/>
            <person name="Carninci P."/>
            <person name="Chao Q."/>
            <person name="Choy N."/>
            <person name="Enju A."/>
            <person name="Goldsmith A.D."/>
            <person name="Gurjal M."/>
            <person name="Hansen N.F."/>
            <person name="Hayashizaki Y."/>
            <person name="Johnson-Hopson C."/>
            <person name="Hsuan V.W."/>
            <person name="Iida K."/>
            <person name="Karnes M."/>
            <person name="Khan S."/>
            <person name="Koesema E."/>
            <person name="Ishida J."/>
            <person name="Jiang P.X."/>
            <person name="Jones T."/>
            <person name="Kawai J."/>
            <person name="Kamiya A."/>
            <person name="Meyers C."/>
            <person name="Nakajima M."/>
            <person name="Narusaka M."/>
            <person name="Seki M."/>
            <person name="Sakurai T."/>
            <person name="Satou M."/>
            <person name="Tamse R."/>
            <person name="Vaysberg M."/>
            <person name="Wallender E.K."/>
            <person name="Wong C."/>
            <person name="Yamamura Y."/>
            <person name="Yuan S."/>
            <person name="Shinozaki K."/>
            <person name="Davis R.W."/>
            <person name="Theologis A."/>
            <person name="Ecker J.R."/>
        </authorList>
    </citation>
    <scope>NUCLEOTIDE SEQUENCE [LARGE SCALE MRNA]</scope>
    <source>
        <strain>cv. Columbia</strain>
    </source>
</reference>
<reference key="4">
    <citation type="journal article" date="2003" name="DNA Res.">
        <title>Comprehensive analysis of NAC family genes in Oryza sativa and Arabidopsis thaliana.</title>
        <authorList>
            <person name="Ooka H."/>
            <person name="Satoh K."/>
            <person name="Doi K."/>
            <person name="Nagata T."/>
            <person name="Otomo Y."/>
            <person name="Murakami K."/>
            <person name="Matsubara K."/>
            <person name="Osato N."/>
            <person name="Kawai J."/>
            <person name="Carninci P."/>
            <person name="Hayashizaki Y."/>
            <person name="Suzuki K."/>
            <person name="Kojima K."/>
            <person name="Takahara Y."/>
            <person name="Yamamoto K."/>
            <person name="Kikuchi S."/>
        </authorList>
    </citation>
    <scope>GENE FAMILY</scope>
    <scope>NOMENCLATURE</scope>
</reference>
<reference key="5">
    <citation type="journal article" date="2007" name="Nucleic Acids Res.">
        <title>Exploring membrane-associated NAC transcription factors in Arabidopsis: implications for membrane biology in genome regulation.</title>
        <authorList>
            <person name="Kim S.Y."/>
            <person name="Kim S.G."/>
            <person name="Kim Y.S."/>
            <person name="Seo P.J."/>
            <person name="Bae M."/>
            <person name="Yoon H.K."/>
            <person name="Park C.M."/>
        </authorList>
    </citation>
    <scope>GENE FAMILY</scope>
    <scope>NOMENCLATURE</scope>
    <scope>TISSUE SPECIFICITY</scope>
    <scope>INDUCTION</scope>
</reference>
<reference key="6">
    <citation type="journal article" date="2013" name="Plant Cell">
        <title>A membrane-bound NAC transcription factor, ANAC017, mediates mitochondrial retrograde signaling in Arabidopsis.</title>
        <authorList>
            <person name="Ng S."/>
            <person name="Ivanova A."/>
            <person name="Duncan O."/>
            <person name="Law S.R."/>
            <person name="Van Aken O."/>
            <person name="De Clercq I."/>
            <person name="Wang Y."/>
            <person name="Carrie C."/>
            <person name="Xu L."/>
            <person name="Kmiec B."/>
            <person name="Walker H."/>
            <person name="Van Breusegem F."/>
            <person name="Whelan J."/>
            <person name="Giraud E."/>
        </authorList>
    </citation>
    <scope>FUNCTION</scope>
    <scope>SUBCELLULAR LOCATION</scope>
</reference>
<keyword id="KW-0010">Activator</keyword>
<keyword id="KW-0238">DNA-binding</keyword>
<keyword id="KW-0256">Endoplasmic reticulum</keyword>
<keyword id="KW-0472">Membrane</keyword>
<keyword id="KW-0539">Nucleus</keyword>
<keyword id="KW-1185">Reference proteome</keyword>
<keyword id="KW-0346">Stress response</keyword>
<keyword id="KW-0804">Transcription</keyword>
<keyword id="KW-0805">Transcription regulation</keyword>
<keyword id="KW-0812">Transmembrane</keyword>
<keyword id="KW-1133">Transmembrane helix</keyword>
<accession>Q9XIC5</accession>
<organism>
    <name type="scientific">Arabidopsis thaliana</name>
    <name type="common">Mouse-ear cress</name>
    <dbReference type="NCBI Taxonomy" id="3702"/>
    <lineage>
        <taxon>Eukaryota</taxon>
        <taxon>Viridiplantae</taxon>
        <taxon>Streptophyta</taxon>
        <taxon>Embryophyta</taxon>
        <taxon>Tracheophyta</taxon>
        <taxon>Spermatophyta</taxon>
        <taxon>Magnoliopsida</taxon>
        <taxon>eudicotyledons</taxon>
        <taxon>Gunneridae</taxon>
        <taxon>Pentapetalae</taxon>
        <taxon>rosids</taxon>
        <taxon>malvids</taxon>
        <taxon>Brassicales</taxon>
        <taxon>Brassicaceae</taxon>
        <taxon>Camelineae</taxon>
        <taxon>Arabidopsis</taxon>
    </lineage>
</organism>
<proteinExistence type="evidence at transcript level"/>
<evidence type="ECO:0000255" key="1"/>
<evidence type="ECO:0000255" key="2">
    <source>
        <dbReference type="PROSITE-ProRule" id="PRU00353"/>
    </source>
</evidence>
<evidence type="ECO:0000269" key="3">
    <source>
    </source>
</evidence>
<evidence type="ECO:0000269" key="4">
    <source>
    </source>
</evidence>
<evidence type="ECO:0000303" key="5">
    <source>
    </source>
</evidence>
<evidence type="ECO:0000303" key="6">
    <source>
    </source>
</evidence>
<evidence type="ECO:0000303" key="7">
    <source>
    </source>
</evidence>
<evidence type="ECO:0000312" key="8">
    <source>
        <dbReference type="Araport" id="AT1G34190"/>
    </source>
</evidence>
<evidence type="ECO:0000312" key="9">
    <source>
        <dbReference type="EMBL" id="AAD39612.1"/>
    </source>
</evidence>
<evidence type="ECO:0000312" key="10">
    <source>
        <dbReference type="EMBL" id="AEE31684.1"/>
    </source>
</evidence>
<comment type="function">
    <text evidence="4">Transcriptional activator activated by proteolytic cleavage through regulated intramembrane proteolysis (RIP). Transcriptional activator that acts as a positive regulator of AOX1A during mitochondrial dysfunction. Binds directly to AOX1A promoter. Mediates mitochondrial retrograde signaling.</text>
</comment>
<comment type="subcellular location">
    <subcellularLocation>
        <location evidence="4">Endoplasmic reticulum membrane</location>
        <topology evidence="1">Single-pass membrane protein</topology>
    </subcellularLocation>
    <subcellularLocation>
        <location evidence="2 4">Nucleus</location>
    </subcellularLocation>
    <text evidence="4">Localized primarily in endoplasmic reticulum membrane as dormant form and, upon abiotic stress, is processed into a transcriptionally active and nuclear form after a proteolytic cleavage through regulated intramembrane proteolysis (RIP).</text>
</comment>
<comment type="tissue specificity">
    <text evidence="3">Expressed in roots, rosette leaves, cauline leaves, shoot apex, stems and flowers.</text>
</comment>
<comment type="induction">
    <text evidence="3">By cold and drought stresses.</text>
</comment>
<comment type="domain">
    <text evidence="2">The NAC domain includes a DNA binding domain and a dimerization domain.</text>
</comment>